<organism>
    <name type="scientific">Pan troglodytes</name>
    <name type="common">Chimpanzee</name>
    <dbReference type="NCBI Taxonomy" id="9598"/>
    <lineage>
        <taxon>Eukaryota</taxon>
        <taxon>Metazoa</taxon>
        <taxon>Chordata</taxon>
        <taxon>Craniata</taxon>
        <taxon>Vertebrata</taxon>
        <taxon>Euteleostomi</taxon>
        <taxon>Mammalia</taxon>
        <taxon>Eutheria</taxon>
        <taxon>Euarchontoglires</taxon>
        <taxon>Primates</taxon>
        <taxon>Haplorrhini</taxon>
        <taxon>Catarrhini</taxon>
        <taxon>Hominidae</taxon>
        <taxon>Pan</taxon>
    </lineage>
</organism>
<keyword id="KW-0165">Cleavage on pair of basic residues</keyword>
<keyword id="KW-1015">Disulfide bond</keyword>
<keyword id="KW-0372">Hormone</keyword>
<keyword id="KW-1185">Reference proteome</keyword>
<keyword id="KW-0964">Secreted</keyword>
<keyword id="KW-0732">Signal</keyword>
<sequence length="166" mass="18731">SRAVADSWMDEVIKLCGRELVRAQIAICGMSTWSKRSLSQEDAPQTPRPVAEIVPSFINKDTETIIIMLEFIANLPPELKAALSERQPSLPEPQQYVPALKDSNLSFEEFKKLIRNRQSEAADSNPSELKYLGLDTHSQKKRQPYVALFEKCCLIGCTKRSLANYC</sequence>
<protein>
    <recommendedName>
        <fullName>Prorelaxin H1</fullName>
    </recommendedName>
    <component>
        <recommendedName>
            <fullName>Relaxin B chain</fullName>
        </recommendedName>
    </component>
    <component>
        <recommendedName>
            <fullName>Relaxin A chain</fullName>
        </recommendedName>
    </component>
</protein>
<comment type="function">
    <text>Relaxin is an ovarian hormone that acts with estrogen to produce dilatation of the birth canal in many mammals. May be involved in remodeling of connective tissues during pregnancy, promoting growth of pubic ligaments and ripening of the cervix.</text>
</comment>
<comment type="subunit">
    <text>Heterodimer of a B chain and an A chain linked by two disulfide bonds.</text>
</comment>
<comment type="subcellular location">
    <subcellularLocation>
        <location>Secreted</location>
    </subcellularLocation>
</comment>
<comment type="tissue specificity">
    <text>Expressed in the corpus luteum of pregnancy but not in the placenta.</text>
</comment>
<comment type="similarity">
    <text evidence="2">Belongs to the insulin family.</text>
</comment>
<gene>
    <name type="primary">RNL1</name>
    <name type="synonym">RLX1</name>
</gene>
<proteinExistence type="evidence at transcript level"/>
<feature type="signal peptide" evidence="1">
    <location>
        <begin position="1" status="less than"/>
        <end position="5"/>
    </location>
</feature>
<feature type="peptide" id="PRO_0000016106" description="Relaxin B chain" evidence="1">
    <location>
        <begin position="6"/>
        <end position="34"/>
    </location>
</feature>
<feature type="propeptide" id="PRO_0000016107" description="Connecting peptide" evidence="1">
    <location>
        <begin position="37"/>
        <end position="139"/>
    </location>
</feature>
<feature type="peptide" id="PRO_0000016108" description="Relaxin A chain" evidence="1">
    <location>
        <begin position="143"/>
        <end position="166"/>
    </location>
</feature>
<feature type="disulfide bond" description="Interchain (between B and A chains)" evidence="1">
    <location>
        <begin position="16"/>
        <end position="153"/>
    </location>
</feature>
<feature type="disulfide bond" description="Interchain (between B and A chains)" evidence="1">
    <location>
        <begin position="28"/>
        <end position="166"/>
    </location>
</feature>
<feature type="disulfide bond" evidence="1">
    <location>
        <begin position="152"/>
        <end position="157"/>
    </location>
</feature>
<feature type="non-terminal residue">
    <location>
        <position position="1"/>
    </location>
</feature>
<evidence type="ECO:0000250" key="1"/>
<evidence type="ECO:0000305" key="2"/>
<name>REL1_PANTR</name>
<dbReference type="EMBL" id="Z27225">
    <property type="protein sequence ID" value="CAA81739.1"/>
    <property type="molecule type" value="mRNA"/>
</dbReference>
<dbReference type="PIR" id="S42783">
    <property type="entry name" value="S42783"/>
</dbReference>
<dbReference type="SMR" id="P51454"/>
<dbReference type="STRING" id="9598.ENSPTRP00000054896"/>
<dbReference type="PaxDb" id="9598-ENSPTRP00000054896"/>
<dbReference type="eggNOG" id="ENOG502TH8D">
    <property type="taxonomic scope" value="Eukaryota"/>
</dbReference>
<dbReference type="InParanoid" id="P51454"/>
<dbReference type="Proteomes" id="UP000002277">
    <property type="component" value="Unplaced"/>
</dbReference>
<dbReference type="GO" id="GO:0005576">
    <property type="term" value="C:extracellular region"/>
    <property type="evidence" value="ECO:0007669"/>
    <property type="project" value="UniProtKB-SubCell"/>
</dbReference>
<dbReference type="GO" id="GO:0005179">
    <property type="term" value="F:hormone activity"/>
    <property type="evidence" value="ECO:0007669"/>
    <property type="project" value="UniProtKB-KW"/>
</dbReference>
<dbReference type="CDD" id="cd04365">
    <property type="entry name" value="IlGF_relaxin_like"/>
    <property type="match status" value="1"/>
</dbReference>
<dbReference type="Gene3D" id="1.10.100.10">
    <property type="entry name" value="Insulin-like"/>
    <property type="match status" value="1"/>
</dbReference>
<dbReference type="InterPro" id="IPR016179">
    <property type="entry name" value="Insulin-like"/>
</dbReference>
<dbReference type="InterPro" id="IPR036438">
    <property type="entry name" value="Insulin-like_sf"/>
</dbReference>
<dbReference type="InterPro" id="IPR022353">
    <property type="entry name" value="Insulin_CS"/>
</dbReference>
<dbReference type="InterPro" id="IPR022352">
    <property type="entry name" value="Insulin_family"/>
</dbReference>
<dbReference type="InterPro" id="IPR022421">
    <property type="entry name" value="Relaxin"/>
</dbReference>
<dbReference type="InterPro" id="IPR051042">
    <property type="entry name" value="Repro_Hormone_Insulin-like"/>
</dbReference>
<dbReference type="PANTHER" id="PTHR12004:SF14">
    <property type="entry name" value="PRORELAXIN H1"/>
    <property type="match status" value="1"/>
</dbReference>
<dbReference type="PANTHER" id="PTHR12004">
    <property type="entry name" value="RELAXIN"/>
    <property type="match status" value="1"/>
</dbReference>
<dbReference type="Pfam" id="PF00049">
    <property type="entry name" value="Insulin"/>
    <property type="match status" value="1"/>
</dbReference>
<dbReference type="PRINTS" id="PR00276">
    <property type="entry name" value="INSULINFAMLY"/>
</dbReference>
<dbReference type="PRINTS" id="PR02004">
    <property type="entry name" value="RELAXIN"/>
</dbReference>
<dbReference type="SMART" id="SM00078">
    <property type="entry name" value="IlGF"/>
    <property type="match status" value="1"/>
</dbReference>
<dbReference type="SUPFAM" id="SSF56994">
    <property type="entry name" value="Insulin-like"/>
    <property type="match status" value="1"/>
</dbReference>
<dbReference type="PROSITE" id="PS00262">
    <property type="entry name" value="INSULIN"/>
    <property type="match status" value="1"/>
</dbReference>
<reference key="1">
    <citation type="journal article" date="1994" name="J. Endocrinol.">
        <title>Characterization of two relaxin genes in the chimpanzee.</title>
        <authorList>
            <person name="Evans B.A."/>
            <person name="Fu P."/>
            <person name="Tregear G.W."/>
        </authorList>
    </citation>
    <scope>NUCLEOTIDE SEQUENCE [MRNA]</scope>
    <source>
        <tissue>Placenta</tissue>
    </source>
</reference>
<accession>P51454</accession>